<proteinExistence type="evidence at protein level"/>
<organism>
    <name type="scientific">Saccharomyces cerevisiae (strain ATCC 204508 / S288c)</name>
    <name type="common">Baker's yeast</name>
    <dbReference type="NCBI Taxonomy" id="559292"/>
    <lineage>
        <taxon>Eukaryota</taxon>
        <taxon>Fungi</taxon>
        <taxon>Dikarya</taxon>
        <taxon>Ascomycota</taxon>
        <taxon>Saccharomycotina</taxon>
        <taxon>Saccharomycetes</taxon>
        <taxon>Saccharomycetales</taxon>
        <taxon>Saccharomycetaceae</taxon>
        <taxon>Saccharomyces</taxon>
    </lineage>
</organism>
<keyword id="KW-0002">3D-structure</keyword>
<keyword id="KW-0012">Acyltransferase</keyword>
<keyword id="KW-0963">Cytoplasm</keyword>
<keyword id="KW-1185">Reference proteome</keyword>
<keyword id="KW-0808">Transferase</keyword>
<sequence length="176" mass="19727">MGRDICTLDNVYANNLGMLTKLAHVTVPNLYQDAFFSALFAEDSLVAKNKKPSSKKDVHFTQMAYYSEIPVGGLVAKLVPKKQNELSLKGIQIEFLGVLPNYRHKSIGSKLLKFAEDKCSECHQHNVFVYLPAVDDLTKQWFIAHGFEQVGETVNNFIKGVNGDEQDAILLKKHIS</sequence>
<feature type="chain" id="PRO_0000240642" description="N-alpha-acetyltransferase NAT5">
    <location>
        <begin position="1"/>
        <end position="176"/>
    </location>
</feature>
<feature type="domain" description="N-acetyltransferase" evidence="1">
    <location>
        <begin position="14"/>
        <end position="176"/>
    </location>
</feature>
<feature type="strand" evidence="9">
    <location>
        <begin position="5"/>
        <end position="9"/>
    </location>
</feature>
<feature type="helix" evidence="9">
    <location>
        <begin position="13"/>
        <end position="15"/>
    </location>
</feature>
<feature type="helix" evidence="9">
    <location>
        <begin position="16"/>
        <end position="26"/>
    </location>
</feature>
<feature type="helix" evidence="9">
    <location>
        <begin position="33"/>
        <end position="39"/>
    </location>
</feature>
<feature type="strand" evidence="9">
    <location>
        <begin position="59"/>
        <end position="66"/>
    </location>
</feature>
<feature type="strand" evidence="9">
    <location>
        <begin position="69"/>
        <end position="79"/>
    </location>
</feature>
<feature type="strand" evidence="9">
    <location>
        <begin position="90"/>
        <end position="98"/>
    </location>
</feature>
<feature type="helix" evidence="9">
    <location>
        <begin position="100"/>
        <end position="102"/>
    </location>
</feature>
<feature type="strand" evidence="9">
    <location>
        <begin position="104"/>
        <end position="106"/>
    </location>
</feature>
<feature type="helix" evidence="9">
    <location>
        <begin position="107"/>
        <end position="121"/>
    </location>
</feature>
<feature type="strand" evidence="9">
    <location>
        <begin position="126"/>
        <end position="132"/>
    </location>
</feature>
<feature type="helix" evidence="9">
    <location>
        <begin position="136"/>
        <end position="144"/>
    </location>
</feature>
<feature type="strand" evidence="9">
    <location>
        <begin position="148"/>
        <end position="159"/>
    </location>
</feature>
<feature type="strand" evidence="9">
    <location>
        <begin position="165"/>
        <end position="174"/>
    </location>
</feature>
<protein>
    <recommendedName>
        <fullName evidence="7">N-alpha-acetyltransferase NAT5</fullName>
        <shortName>NatA complex subunit NAT5</shortName>
        <ecNumber evidence="5">2.3.1.258</ecNumber>
    </recommendedName>
</protein>
<gene>
    <name evidence="6 8" type="primary">NAT5</name>
    <name type="ordered locus">YOR253W</name>
</gene>
<comment type="function">
    <text evidence="2 5">N-alpha-acetyltransferase that acetylates the N-terminus of proteins that retain their initiating methionine (PubMed:25886145). Has a broad substrate specificity: able to acetylate the initiator methionine of most peptides (PubMed:25886145). Non-essential component of the NatA N-terminal acetyltransferase (PubMed:14517307).</text>
</comment>
<comment type="catalytic activity">
    <reaction evidence="5">
        <text>N-terminal L-methionyl-L-alanyl-[protein] + acetyl-CoA = N-terminal N(alpha)-acetyl-L-methionyl-L-alanyl-[protein] + CoA + H(+)</text>
        <dbReference type="Rhea" id="RHEA:50564"/>
        <dbReference type="Rhea" id="RHEA-COMP:12726"/>
        <dbReference type="Rhea" id="RHEA-COMP:12727"/>
        <dbReference type="ChEBI" id="CHEBI:15378"/>
        <dbReference type="ChEBI" id="CHEBI:57287"/>
        <dbReference type="ChEBI" id="CHEBI:57288"/>
        <dbReference type="ChEBI" id="CHEBI:133398"/>
        <dbReference type="ChEBI" id="CHEBI:133399"/>
        <dbReference type="EC" id="2.3.1.258"/>
    </reaction>
</comment>
<comment type="catalytic activity">
    <reaction evidence="5">
        <text>N-terminal L-methionyl-L-seryl-[protein] + acetyl-CoA = N-terminal N(alpha)-acetyl-L-methionyl-L-seryl-[protein] + CoA + H(+)</text>
        <dbReference type="Rhea" id="RHEA:50568"/>
        <dbReference type="Rhea" id="RHEA-COMP:12728"/>
        <dbReference type="Rhea" id="RHEA-COMP:12729"/>
        <dbReference type="ChEBI" id="CHEBI:15378"/>
        <dbReference type="ChEBI" id="CHEBI:57287"/>
        <dbReference type="ChEBI" id="CHEBI:57288"/>
        <dbReference type="ChEBI" id="CHEBI:133400"/>
        <dbReference type="ChEBI" id="CHEBI:133401"/>
        <dbReference type="EC" id="2.3.1.258"/>
    </reaction>
</comment>
<comment type="catalytic activity">
    <reaction evidence="5">
        <text>N-terminal L-methionyl-L-valyl-[protein] + acetyl-CoA = N-terminal N(alpha)-acetyl-L-methionyl-L-valyl-[protein] + CoA + H(+)</text>
        <dbReference type="Rhea" id="RHEA:50572"/>
        <dbReference type="Rhea" id="RHEA-COMP:12730"/>
        <dbReference type="Rhea" id="RHEA-COMP:12731"/>
        <dbReference type="ChEBI" id="CHEBI:15378"/>
        <dbReference type="ChEBI" id="CHEBI:57287"/>
        <dbReference type="ChEBI" id="CHEBI:57288"/>
        <dbReference type="ChEBI" id="CHEBI:133402"/>
        <dbReference type="ChEBI" id="CHEBI:133403"/>
        <dbReference type="EC" id="2.3.1.258"/>
    </reaction>
</comment>
<comment type="catalytic activity">
    <reaction evidence="5">
        <text>N-terminal L-methionyl-L-threonyl-[protein] + acetyl-CoA = N-terminal N(alpha)-acetyl-L-methionyl-L-threonyl-[protein] + CoA + H(+)</text>
        <dbReference type="Rhea" id="RHEA:50576"/>
        <dbReference type="Rhea" id="RHEA-COMP:12732"/>
        <dbReference type="Rhea" id="RHEA-COMP:12733"/>
        <dbReference type="ChEBI" id="CHEBI:15378"/>
        <dbReference type="ChEBI" id="CHEBI:57287"/>
        <dbReference type="ChEBI" id="CHEBI:57288"/>
        <dbReference type="ChEBI" id="CHEBI:133404"/>
        <dbReference type="ChEBI" id="CHEBI:133405"/>
        <dbReference type="EC" id="2.3.1.258"/>
    </reaction>
</comment>
<comment type="catalytic activity">
    <reaction evidence="5">
        <text>N-terminal L-methionyl-L-lysyl-[protein] + acetyl-CoA = N-terminal N(alpha)-acetyl-L-methionyl-L-lysyl-[protein] + CoA + H(+)</text>
        <dbReference type="Rhea" id="RHEA:50580"/>
        <dbReference type="Rhea" id="RHEA-COMP:12734"/>
        <dbReference type="Rhea" id="RHEA-COMP:12735"/>
        <dbReference type="ChEBI" id="CHEBI:15378"/>
        <dbReference type="ChEBI" id="CHEBI:57287"/>
        <dbReference type="ChEBI" id="CHEBI:57288"/>
        <dbReference type="ChEBI" id="CHEBI:133406"/>
        <dbReference type="ChEBI" id="CHEBI:133407"/>
        <dbReference type="EC" id="2.3.1.258"/>
    </reaction>
</comment>
<comment type="catalytic activity">
    <reaction evidence="5">
        <text>N-terminal L-methionyl-L-leucyl-[protein] + acetyl-CoA = N-terminal N(alpha)-acetyl-L-methionyl-L-leucyl-[protein] + CoA + H(+)</text>
        <dbReference type="Rhea" id="RHEA:50520"/>
        <dbReference type="Rhea" id="RHEA-COMP:12711"/>
        <dbReference type="Rhea" id="RHEA-COMP:12712"/>
        <dbReference type="ChEBI" id="CHEBI:15378"/>
        <dbReference type="ChEBI" id="CHEBI:57287"/>
        <dbReference type="ChEBI" id="CHEBI:57288"/>
        <dbReference type="ChEBI" id="CHEBI:133377"/>
        <dbReference type="ChEBI" id="CHEBI:133378"/>
        <dbReference type="EC" id="2.3.1.258"/>
    </reaction>
</comment>
<comment type="catalytic activity">
    <reaction evidence="5">
        <text>N-terminal L-methionyl-L-phenylalanyl-[protein] + acetyl-CoA = N-terminal N(alpha)-acetyl-L-methionyl-L-phenylalanyl-[protein] + CoA + H(+)</text>
        <dbReference type="Rhea" id="RHEA:50528"/>
        <dbReference type="Rhea" id="RHEA-COMP:12715"/>
        <dbReference type="Rhea" id="RHEA-COMP:12716"/>
        <dbReference type="ChEBI" id="CHEBI:15378"/>
        <dbReference type="ChEBI" id="CHEBI:57287"/>
        <dbReference type="ChEBI" id="CHEBI:57288"/>
        <dbReference type="ChEBI" id="CHEBI:133382"/>
        <dbReference type="ChEBI" id="CHEBI:133383"/>
        <dbReference type="EC" id="2.3.1.258"/>
    </reaction>
</comment>
<comment type="catalytic activity">
    <reaction evidence="5">
        <text>N-terminal L-methionyl-L-tyrosyl-[protein] + acetyl-CoA = N-terminal N(alpha)-acetyl-L-methionyl-L-tyrosyl-[protein] + CoA + H(+)</text>
        <dbReference type="Rhea" id="RHEA:50532"/>
        <dbReference type="Rhea" id="RHEA-COMP:12717"/>
        <dbReference type="Rhea" id="RHEA-COMP:12718"/>
        <dbReference type="ChEBI" id="CHEBI:15378"/>
        <dbReference type="ChEBI" id="CHEBI:57287"/>
        <dbReference type="ChEBI" id="CHEBI:57288"/>
        <dbReference type="ChEBI" id="CHEBI:133384"/>
        <dbReference type="ChEBI" id="CHEBI:133385"/>
        <dbReference type="EC" id="2.3.1.258"/>
    </reaction>
</comment>
<comment type="subunit">
    <text evidence="2">Component of the N-terminal acetyltransferase A (NatA) complex, which is composed of ARD1, NAT1 and NAT5.</text>
</comment>
<comment type="subcellular location">
    <subcellularLocation>
        <location evidence="3">Cytoplasm</location>
    </subcellularLocation>
</comment>
<comment type="miscellaneous">
    <text evidence="4">Present with 2370 molecules/cell in log phase SD medium.</text>
</comment>
<comment type="similarity">
    <text evidence="7">Belongs to the acetyltransferase family.</text>
</comment>
<accession>Q08689</accession>
<accession>D6W2V4</accession>
<evidence type="ECO:0000255" key="1">
    <source>
        <dbReference type="PROSITE-ProRule" id="PRU00532"/>
    </source>
</evidence>
<evidence type="ECO:0000269" key="2">
    <source>
    </source>
</evidence>
<evidence type="ECO:0000269" key="3">
    <source>
    </source>
</evidence>
<evidence type="ECO:0000269" key="4">
    <source>
    </source>
</evidence>
<evidence type="ECO:0000269" key="5">
    <source>
    </source>
</evidence>
<evidence type="ECO:0000303" key="6">
    <source>
    </source>
</evidence>
<evidence type="ECO:0000305" key="7"/>
<evidence type="ECO:0000312" key="8">
    <source>
        <dbReference type="SGD" id="S000005779"/>
    </source>
</evidence>
<evidence type="ECO:0007829" key="9">
    <source>
        <dbReference type="PDB" id="4XNH"/>
    </source>
</evidence>
<name>NAT5_YEAST</name>
<dbReference type="EC" id="2.3.1.258" evidence="5"/>
<dbReference type="EMBL" id="Z75161">
    <property type="protein sequence ID" value="CAA99475.1"/>
    <property type="molecule type" value="Genomic_DNA"/>
</dbReference>
<dbReference type="EMBL" id="AY557750">
    <property type="protein sequence ID" value="AAS56076.1"/>
    <property type="molecule type" value="Genomic_DNA"/>
</dbReference>
<dbReference type="EMBL" id="BK006948">
    <property type="protein sequence ID" value="DAA11020.1"/>
    <property type="molecule type" value="Genomic_DNA"/>
</dbReference>
<dbReference type="PIR" id="S67150">
    <property type="entry name" value="S67150"/>
</dbReference>
<dbReference type="RefSeq" id="NP_014896.3">
    <property type="nucleotide sequence ID" value="NM_001183672.3"/>
</dbReference>
<dbReference type="PDB" id="4XNH">
    <property type="method" value="X-ray"/>
    <property type="resolution" value="2.10 A"/>
    <property type="chains" value="C=1-176"/>
</dbReference>
<dbReference type="PDB" id="4XPD">
    <property type="method" value="X-ray"/>
    <property type="resolution" value="2.81 A"/>
    <property type="chains" value="C=1-176"/>
</dbReference>
<dbReference type="PDB" id="4Y49">
    <property type="method" value="X-ray"/>
    <property type="resolution" value="3.95 A"/>
    <property type="chains" value="C/I/O=1-176"/>
</dbReference>
<dbReference type="PDB" id="6HD5">
    <property type="method" value="EM"/>
    <property type="resolution" value="4.80 A"/>
    <property type="chains" value="v=1-176"/>
</dbReference>
<dbReference type="PDB" id="6HD7">
    <property type="method" value="EM"/>
    <property type="resolution" value="3.40 A"/>
    <property type="chains" value="v=1-176"/>
</dbReference>
<dbReference type="PDB" id="6O07">
    <property type="method" value="X-ray"/>
    <property type="resolution" value="2.70 A"/>
    <property type="chains" value="C=1-176"/>
</dbReference>
<dbReference type="PDBsum" id="4XNH"/>
<dbReference type="PDBsum" id="4XPD"/>
<dbReference type="PDBsum" id="4Y49"/>
<dbReference type="PDBsum" id="6HD5"/>
<dbReference type="PDBsum" id="6HD7"/>
<dbReference type="PDBsum" id="6O07"/>
<dbReference type="EMDB" id="EMD-0201"/>
<dbReference type="EMDB" id="EMD-0202"/>
<dbReference type="SMR" id="Q08689"/>
<dbReference type="BioGRID" id="34643">
    <property type="interactions" value="90"/>
</dbReference>
<dbReference type="ComplexPortal" id="CPX-783">
    <property type="entry name" value="NatA N-alpha-acetyltransferase complex"/>
</dbReference>
<dbReference type="FunCoup" id="Q08689">
    <property type="interactions" value="100"/>
</dbReference>
<dbReference type="IntAct" id="Q08689">
    <property type="interactions" value="32"/>
</dbReference>
<dbReference type="MINT" id="Q08689"/>
<dbReference type="STRING" id="4932.YOR253W"/>
<dbReference type="iPTMnet" id="Q08689"/>
<dbReference type="PaxDb" id="4932-YOR253W"/>
<dbReference type="PeptideAtlas" id="Q08689"/>
<dbReference type="EnsemblFungi" id="YOR253W_mRNA">
    <property type="protein sequence ID" value="YOR253W"/>
    <property type="gene ID" value="YOR253W"/>
</dbReference>
<dbReference type="GeneID" id="854427"/>
<dbReference type="KEGG" id="sce:YOR253W"/>
<dbReference type="AGR" id="SGD:S000005779"/>
<dbReference type="SGD" id="S000005779">
    <property type="gene designation" value="NAT5"/>
</dbReference>
<dbReference type="VEuPathDB" id="FungiDB:YOR253W"/>
<dbReference type="eggNOG" id="KOG3138">
    <property type="taxonomic scope" value="Eukaryota"/>
</dbReference>
<dbReference type="HOGENOM" id="CLU_013985_5_3_1"/>
<dbReference type="InParanoid" id="Q08689"/>
<dbReference type="OMA" id="RCKKETH"/>
<dbReference type="OrthoDB" id="47374at2759"/>
<dbReference type="BioCyc" id="YEAST:G3O-33744-MONOMER"/>
<dbReference type="BRENDA" id="2.3.1.258">
    <property type="organism ID" value="984"/>
</dbReference>
<dbReference type="BioGRID-ORCS" id="854427">
    <property type="hits" value="1 hit in 10 CRISPR screens"/>
</dbReference>
<dbReference type="PRO" id="PR:Q08689"/>
<dbReference type="Proteomes" id="UP000002311">
    <property type="component" value="Chromosome XV"/>
</dbReference>
<dbReference type="RNAct" id="Q08689">
    <property type="molecule type" value="protein"/>
</dbReference>
<dbReference type="GO" id="GO:0031415">
    <property type="term" value="C:NatA complex"/>
    <property type="evidence" value="ECO:0000314"/>
    <property type="project" value="SGD"/>
</dbReference>
<dbReference type="GO" id="GO:0120518">
    <property type="term" value="F:protein N-terminal-methionine acetyltransferase activity"/>
    <property type="evidence" value="ECO:0007669"/>
    <property type="project" value="UniProtKB-EC"/>
</dbReference>
<dbReference type="GO" id="GO:0004596">
    <property type="term" value="F:protein-N-terminal amino-acid acetyltransferase activity"/>
    <property type="evidence" value="ECO:0000315"/>
    <property type="project" value="SGD"/>
</dbReference>
<dbReference type="GO" id="GO:0007064">
    <property type="term" value="P:mitotic sister chromatid cohesion"/>
    <property type="evidence" value="ECO:0000318"/>
    <property type="project" value="GO_Central"/>
</dbReference>
<dbReference type="CDD" id="cd04301">
    <property type="entry name" value="NAT_SF"/>
    <property type="match status" value="1"/>
</dbReference>
<dbReference type="Gene3D" id="3.40.630.30">
    <property type="match status" value="1"/>
</dbReference>
<dbReference type="InterPro" id="IPR016181">
    <property type="entry name" value="Acyl_CoA_acyltransferase"/>
</dbReference>
<dbReference type="InterPro" id="IPR000182">
    <property type="entry name" value="GNAT_dom"/>
</dbReference>
<dbReference type="InterPro" id="IPR051556">
    <property type="entry name" value="N-term/lysine_N-AcTrnsfr"/>
</dbReference>
<dbReference type="PANTHER" id="PTHR42919">
    <property type="entry name" value="N-ALPHA-ACETYLTRANSFERASE"/>
    <property type="match status" value="1"/>
</dbReference>
<dbReference type="PANTHER" id="PTHR42919:SF8">
    <property type="entry name" value="N-ALPHA-ACETYLTRANSFERASE 50"/>
    <property type="match status" value="1"/>
</dbReference>
<dbReference type="Pfam" id="PF00583">
    <property type="entry name" value="Acetyltransf_1"/>
    <property type="match status" value="1"/>
</dbReference>
<dbReference type="SUPFAM" id="SSF55729">
    <property type="entry name" value="Acyl-CoA N-acyltransferases (Nat)"/>
    <property type="match status" value="1"/>
</dbReference>
<dbReference type="PROSITE" id="PS51186">
    <property type="entry name" value="GNAT"/>
    <property type="match status" value="1"/>
</dbReference>
<reference key="1">
    <citation type="journal article" date="1997" name="Nature">
        <title>The nucleotide sequence of Saccharomyces cerevisiae chromosome XV.</title>
        <authorList>
            <person name="Dujon B."/>
            <person name="Albermann K."/>
            <person name="Aldea M."/>
            <person name="Alexandraki D."/>
            <person name="Ansorge W."/>
            <person name="Arino J."/>
            <person name="Benes V."/>
            <person name="Bohn C."/>
            <person name="Bolotin-Fukuhara M."/>
            <person name="Bordonne R."/>
            <person name="Boyer J."/>
            <person name="Camasses A."/>
            <person name="Casamayor A."/>
            <person name="Casas C."/>
            <person name="Cheret G."/>
            <person name="Cziepluch C."/>
            <person name="Daignan-Fornier B."/>
            <person name="Dang V.-D."/>
            <person name="de Haan M."/>
            <person name="Delius H."/>
            <person name="Durand P."/>
            <person name="Fairhead C."/>
            <person name="Feldmann H."/>
            <person name="Gaillon L."/>
            <person name="Galisson F."/>
            <person name="Gamo F.-J."/>
            <person name="Gancedo C."/>
            <person name="Goffeau A."/>
            <person name="Goulding S.E."/>
            <person name="Grivell L.A."/>
            <person name="Habbig B."/>
            <person name="Hand N.J."/>
            <person name="Hani J."/>
            <person name="Hattenhorst U."/>
            <person name="Hebling U."/>
            <person name="Hernando Y."/>
            <person name="Herrero E."/>
            <person name="Heumann K."/>
            <person name="Hiesel R."/>
            <person name="Hilger F."/>
            <person name="Hofmann B."/>
            <person name="Hollenberg C.P."/>
            <person name="Hughes B."/>
            <person name="Jauniaux J.-C."/>
            <person name="Kalogeropoulos A."/>
            <person name="Katsoulou C."/>
            <person name="Kordes E."/>
            <person name="Lafuente M.J."/>
            <person name="Landt O."/>
            <person name="Louis E.J."/>
            <person name="Maarse A.C."/>
            <person name="Madania A."/>
            <person name="Mannhaupt G."/>
            <person name="Marck C."/>
            <person name="Martin R.P."/>
            <person name="Mewes H.-W."/>
            <person name="Michaux G."/>
            <person name="Paces V."/>
            <person name="Parle-McDermott A.G."/>
            <person name="Pearson B.M."/>
            <person name="Perrin A."/>
            <person name="Pettersson B."/>
            <person name="Poch O."/>
            <person name="Pohl T.M."/>
            <person name="Poirey R."/>
            <person name="Portetelle D."/>
            <person name="Pujol A."/>
            <person name="Purnelle B."/>
            <person name="Ramezani Rad M."/>
            <person name="Rechmann S."/>
            <person name="Schwager C."/>
            <person name="Schweizer M."/>
            <person name="Sor F."/>
            <person name="Sterky F."/>
            <person name="Tarassov I.A."/>
            <person name="Teodoru C."/>
            <person name="Tettelin H."/>
            <person name="Thierry A."/>
            <person name="Tobiasch E."/>
            <person name="Tzermia M."/>
            <person name="Uhlen M."/>
            <person name="Unseld M."/>
            <person name="Valens M."/>
            <person name="Vandenbol M."/>
            <person name="Vetter I."/>
            <person name="Vlcek C."/>
            <person name="Voet M."/>
            <person name="Volckaert G."/>
            <person name="Voss H."/>
            <person name="Wambutt R."/>
            <person name="Wedler H."/>
            <person name="Wiemann S."/>
            <person name="Winsor B."/>
            <person name="Wolfe K.H."/>
            <person name="Zollner A."/>
            <person name="Zumstein E."/>
            <person name="Kleine K."/>
        </authorList>
    </citation>
    <scope>NUCLEOTIDE SEQUENCE [LARGE SCALE GENOMIC DNA]</scope>
    <source>
        <strain>ATCC 204508 / S288c</strain>
    </source>
</reference>
<reference key="2">
    <citation type="journal article" date="2014" name="G3 (Bethesda)">
        <title>The reference genome sequence of Saccharomyces cerevisiae: Then and now.</title>
        <authorList>
            <person name="Engel S.R."/>
            <person name="Dietrich F.S."/>
            <person name="Fisk D.G."/>
            <person name="Binkley G."/>
            <person name="Balakrishnan R."/>
            <person name="Costanzo M.C."/>
            <person name="Dwight S.S."/>
            <person name="Hitz B.C."/>
            <person name="Karra K."/>
            <person name="Nash R.S."/>
            <person name="Weng S."/>
            <person name="Wong E.D."/>
            <person name="Lloyd P."/>
            <person name="Skrzypek M.S."/>
            <person name="Miyasato S.R."/>
            <person name="Simison M."/>
            <person name="Cherry J.M."/>
        </authorList>
    </citation>
    <scope>GENOME REANNOTATION</scope>
    <source>
        <strain>ATCC 204508 / S288c</strain>
    </source>
</reference>
<reference key="3">
    <citation type="journal article" date="2007" name="Genome Res.">
        <title>Approaching a complete repository of sequence-verified protein-encoding clones for Saccharomyces cerevisiae.</title>
        <authorList>
            <person name="Hu Y."/>
            <person name="Rolfs A."/>
            <person name="Bhullar B."/>
            <person name="Murthy T.V.S."/>
            <person name="Zhu C."/>
            <person name="Berger M.F."/>
            <person name="Camargo A.A."/>
            <person name="Kelley F."/>
            <person name="McCarron S."/>
            <person name="Jepson D."/>
            <person name="Richardson A."/>
            <person name="Raphael J."/>
            <person name="Moreira D."/>
            <person name="Taycher E."/>
            <person name="Zuo D."/>
            <person name="Mohr S."/>
            <person name="Kane M.F."/>
            <person name="Williamson J."/>
            <person name="Simpson A.J.G."/>
            <person name="Bulyk M.L."/>
            <person name="Harlow E."/>
            <person name="Marsischky G."/>
            <person name="Kolodner R.D."/>
            <person name="LaBaer J."/>
        </authorList>
    </citation>
    <scope>NUCLEOTIDE SEQUENCE [GENOMIC DNA]</scope>
    <source>
        <strain>ATCC 204508 / S288c</strain>
    </source>
</reference>
<reference key="4">
    <citation type="journal article" date="2003" name="Mol. Cell. Biol.">
        <title>The yeast N(alpha)-acetyltransferase NatA is quantitatively anchored to the ribosome and interacts with nascent polypeptides.</title>
        <authorList>
            <person name="Gautschi M."/>
            <person name="Just S."/>
            <person name="Mun A."/>
            <person name="Ross S."/>
            <person name="Rucknagel P."/>
            <person name="Dubaquie Y."/>
            <person name="Ehrenhofer-Murray A."/>
            <person name="Rospert S."/>
        </authorList>
    </citation>
    <scope>FUNCTION</scope>
    <scope>IDENTIFICATION IN THE NATA COMPLEX</scope>
</reference>
<reference key="5">
    <citation type="journal article" date="2003" name="Nature">
        <title>Global analysis of protein localization in budding yeast.</title>
        <authorList>
            <person name="Huh W.-K."/>
            <person name="Falvo J.V."/>
            <person name="Gerke L.C."/>
            <person name="Carroll A.S."/>
            <person name="Howson R.W."/>
            <person name="Weissman J.S."/>
            <person name="O'Shea E.K."/>
        </authorList>
    </citation>
    <scope>SUBCELLULAR LOCATION [LARGE SCALE ANALYSIS]</scope>
</reference>
<reference key="6">
    <citation type="journal article" date="2003" name="Nature">
        <title>Global analysis of protein expression in yeast.</title>
        <authorList>
            <person name="Ghaemmaghami S."/>
            <person name="Huh W.-K."/>
            <person name="Bower K."/>
            <person name="Howson R.W."/>
            <person name="Belle A."/>
            <person name="Dephoure N."/>
            <person name="O'Shea E.K."/>
            <person name="Weissman J.S."/>
        </authorList>
    </citation>
    <scope>LEVEL OF PROTEIN EXPRESSION [LARGE SCALE ANALYSIS]</scope>
</reference>
<reference key="7">
    <citation type="journal article" date="2015" name="Proteomics">
        <title>N-terminal acetylome analysis reveals the specificity of Naa50 (Nat5) and suggests a kinetic competition between N-terminal acetyltransferases and methionine aminopeptidases.</title>
        <authorList>
            <person name="Van Damme P."/>
            <person name="Hole K."/>
            <person name="Gevaert K."/>
            <person name="Arnesen T."/>
        </authorList>
    </citation>
    <scope>FUNCTION</scope>
    <scope>CATALYTIC ACTIVITY</scope>
</reference>